<organism>
    <name type="scientific">Natronomonas pharaonis (strain ATCC 35678 / DSM 2160 / CIP 103997 / JCM 8858 / NBRC 14720 / NCIMB 2260 / Gabara)</name>
    <name type="common">Halobacterium pharaonis</name>
    <dbReference type="NCBI Taxonomy" id="348780"/>
    <lineage>
        <taxon>Archaea</taxon>
        <taxon>Methanobacteriati</taxon>
        <taxon>Methanobacteriota</taxon>
        <taxon>Stenosarchaea group</taxon>
        <taxon>Halobacteria</taxon>
        <taxon>Halobacteriales</taxon>
        <taxon>Haloarculaceae</taxon>
        <taxon>Natronomonas</taxon>
    </lineage>
</organism>
<feature type="chain" id="PRO_1000061340" description="DNA-directed RNA polymerase subunit Rpo12">
    <location>
        <begin position="1"/>
        <end position="44"/>
    </location>
</feature>
<feature type="binding site" evidence="1">
    <location>
        <position position="8"/>
    </location>
    <ligand>
        <name>Zn(2+)</name>
        <dbReference type="ChEBI" id="CHEBI:29105"/>
    </ligand>
</feature>
<feature type="binding site" evidence="1">
    <location>
        <position position="22"/>
    </location>
    <ligand>
        <name>Zn(2+)</name>
        <dbReference type="ChEBI" id="CHEBI:29105"/>
    </ligand>
</feature>
<feature type="binding site" evidence="1">
    <location>
        <position position="25"/>
    </location>
    <ligand>
        <name>Zn(2+)</name>
        <dbReference type="ChEBI" id="CHEBI:29105"/>
    </ligand>
</feature>
<evidence type="ECO:0000255" key="1">
    <source>
        <dbReference type="HAMAP-Rule" id="MF_00615"/>
    </source>
</evidence>
<accession>Q3IMF0</accession>
<name>RPO12_NATPD</name>
<comment type="function">
    <text evidence="1">DNA-dependent RNA polymerase (RNAP) catalyzes the transcription of DNA into RNA using the four ribonucleoside triphosphates as substrates.</text>
</comment>
<comment type="catalytic activity">
    <reaction evidence="1">
        <text>RNA(n) + a ribonucleoside 5'-triphosphate = RNA(n+1) + diphosphate</text>
        <dbReference type="Rhea" id="RHEA:21248"/>
        <dbReference type="Rhea" id="RHEA-COMP:14527"/>
        <dbReference type="Rhea" id="RHEA-COMP:17342"/>
        <dbReference type="ChEBI" id="CHEBI:33019"/>
        <dbReference type="ChEBI" id="CHEBI:61557"/>
        <dbReference type="ChEBI" id="CHEBI:140395"/>
        <dbReference type="EC" id="2.7.7.6"/>
    </reaction>
</comment>
<comment type="cofactor">
    <cofactor evidence="1">
        <name>Zn(2+)</name>
        <dbReference type="ChEBI" id="CHEBI:29105"/>
    </cofactor>
    <text evidence="1">Binds 1 zinc ion.</text>
</comment>
<comment type="subunit">
    <text evidence="1">Part of the RNA polymerase complex.</text>
</comment>
<comment type="subcellular location">
    <subcellularLocation>
        <location evidence="1">Cytoplasm</location>
    </subcellularLocation>
</comment>
<comment type="similarity">
    <text evidence="1">Belongs to the archaeal Rpo12/eukaryotic RPC10 RNA polymerase subunit family.</text>
</comment>
<sequence>MSYKCSRCKRDVELDEYGGVRCPYCGHRVLLKERSRDIKEVEVE</sequence>
<keyword id="KW-0963">Cytoplasm</keyword>
<keyword id="KW-0240">DNA-directed RNA polymerase</keyword>
<keyword id="KW-0479">Metal-binding</keyword>
<keyword id="KW-0548">Nucleotidyltransferase</keyword>
<keyword id="KW-1185">Reference proteome</keyword>
<keyword id="KW-0804">Transcription</keyword>
<keyword id="KW-0808">Transferase</keyword>
<keyword id="KW-0862">Zinc</keyword>
<protein>
    <recommendedName>
        <fullName evidence="1">DNA-directed RNA polymerase subunit Rpo12</fullName>
        <ecNumber evidence="1">2.7.7.6</ecNumber>
    </recommendedName>
    <alternativeName>
        <fullName evidence="1">DNA-directed RNA polymerase subunit P</fullName>
    </alternativeName>
</protein>
<reference key="1">
    <citation type="journal article" date="2005" name="Genome Res.">
        <title>Living with two extremes: conclusions from the genome sequence of Natronomonas pharaonis.</title>
        <authorList>
            <person name="Falb M."/>
            <person name="Pfeiffer F."/>
            <person name="Palm P."/>
            <person name="Rodewald K."/>
            <person name="Hickmann V."/>
            <person name="Tittor J."/>
            <person name="Oesterhelt D."/>
        </authorList>
    </citation>
    <scope>NUCLEOTIDE SEQUENCE [LARGE SCALE GENOMIC DNA]</scope>
    <source>
        <strain>ATCC 35678 / DSM 2160 / CIP 103997 / JCM 8858 / NBRC 14720 / NCIMB 2260 / Gabara</strain>
    </source>
</reference>
<proteinExistence type="inferred from homology"/>
<dbReference type="EC" id="2.7.7.6" evidence="1"/>
<dbReference type="EMBL" id="CR936257">
    <property type="protein sequence ID" value="CAI50708.1"/>
    <property type="molecule type" value="Genomic_DNA"/>
</dbReference>
<dbReference type="RefSeq" id="WP_011324318.1">
    <property type="nucleotide sequence ID" value="NC_007426.1"/>
</dbReference>
<dbReference type="SMR" id="Q3IMF0"/>
<dbReference type="STRING" id="348780.NP_5234A"/>
<dbReference type="EnsemblBacteria" id="CAI50708">
    <property type="protein sequence ID" value="CAI50708"/>
    <property type="gene ID" value="NP_5234A"/>
</dbReference>
<dbReference type="GeneID" id="3703164"/>
<dbReference type="KEGG" id="nph:NP_5234A"/>
<dbReference type="eggNOG" id="arCOG04341">
    <property type="taxonomic scope" value="Archaea"/>
</dbReference>
<dbReference type="HOGENOM" id="CLU_179456_2_1_2"/>
<dbReference type="OrthoDB" id="129238at2157"/>
<dbReference type="Proteomes" id="UP000002698">
    <property type="component" value="Chromosome"/>
</dbReference>
<dbReference type="GO" id="GO:0005737">
    <property type="term" value="C:cytoplasm"/>
    <property type="evidence" value="ECO:0007669"/>
    <property type="project" value="UniProtKB-SubCell"/>
</dbReference>
<dbReference type="GO" id="GO:0000428">
    <property type="term" value="C:DNA-directed RNA polymerase complex"/>
    <property type="evidence" value="ECO:0007669"/>
    <property type="project" value="UniProtKB-KW"/>
</dbReference>
<dbReference type="GO" id="GO:0003677">
    <property type="term" value="F:DNA binding"/>
    <property type="evidence" value="ECO:0007669"/>
    <property type="project" value="InterPro"/>
</dbReference>
<dbReference type="GO" id="GO:0003899">
    <property type="term" value="F:DNA-directed RNA polymerase activity"/>
    <property type="evidence" value="ECO:0007669"/>
    <property type="project" value="UniProtKB-UniRule"/>
</dbReference>
<dbReference type="GO" id="GO:0008270">
    <property type="term" value="F:zinc ion binding"/>
    <property type="evidence" value="ECO:0007669"/>
    <property type="project" value="UniProtKB-UniRule"/>
</dbReference>
<dbReference type="GO" id="GO:0006351">
    <property type="term" value="P:DNA-templated transcription"/>
    <property type="evidence" value="ECO:0007669"/>
    <property type="project" value="UniProtKB-UniRule"/>
</dbReference>
<dbReference type="Gene3D" id="2.20.28.30">
    <property type="entry name" value="RNA polymerase ii, chain L"/>
    <property type="match status" value="1"/>
</dbReference>
<dbReference type="HAMAP" id="MF_00615">
    <property type="entry name" value="RNApol_arch_Rpo12"/>
    <property type="match status" value="1"/>
</dbReference>
<dbReference type="InterPro" id="IPR006591">
    <property type="entry name" value="RNAP_P/RPABC4"/>
</dbReference>
<dbReference type="InterPro" id="IPR029040">
    <property type="entry name" value="RPABC4/Spt4"/>
</dbReference>
<dbReference type="InterPro" id="IPR023464">
    <property type="entry name" value="Rpo12"/>
</dbReference>
<dbReference type="NCBIfam" id="NF001606">
    <property type="entry name" value="PRK00398.1-3"/>
    <property type="match status" value="1"/>
</dbReference>
<dbReference type="Pfam" id="PF03604">
    <property type="entry name" value="Zn_ribbon_RPAB4"/>
    <property type="match status" value="1"/>
</dbReference>
<dbReference type="SMART" id="SM00659">
    <property type="entry name" value="RPOLCX"/>
    <property type="match status" value="1"/>
</dbReference>
<dbReference type="SUPFAM" id="SSF63393">
    <property type="entry name" value="RNA polymerase subunits"/>
    <property type="match status" value="1"/>
</dbReference>
<gene>
    <name evidence="1" type="primary">rpo12</name>
    <name evidence="1" type="synonym">rpoP</name>
    <name type="ordered locus">NP_5234A</name>
</gene>